<keyword id="KW-1003">Cell membrane</keyword>
<keyword id="KW-0961">Cell wall biogenesis/degradation</keyword>
<keyword id="KW-0968">Cytoplasmic vesicle</keyword>
<keyword id="KW-0325">Glycoprotein</keyword>
<keyword id="KW-0328">Glycosyltransferase</keyword>
<keyword id="KW-0472">Membrane</keyword>
<keyword id="KW-1185">Reference proteome</keyword>
<keyword id="KW-0808">Transferase</keyword>
<keyword id="KW-0812">Transmembrane</keyword>
<keyword id="KW-1133">Transmembrane helix</keyword>
<name>CHS2_MYCMD</name>
<evidence type="ECO:0000250" key="1"/>
<evidence type="ECO:0000255" key="2"/>
<evidence type="ECO:0000256" key="3">
    <source>
        <dbReference type="SAM" id="MobiDB-lite"/>
    </source>
</evidence>
<evidence type="ECO:0000269" key="4">
    <source>
    </source>
</evidence>
<evidence type="ECO:0000269" key="5">
    <source>
    </source>
</evidence>
<evidence type="ECO:0000303" key="6">
    <source>
    </source>
</evidence>
<evidence type="ECO:0000305" key="7"/>
<evidence type="ECO:0000305" key="8">
    <source ref="2"/>
</evidence>
<reference key="1">
    <citation type="journal article" date="2006" name="Nature">
        <title>Insights from the genome of the biotrophic fungal plant pathogen Ustilago maydis.</title>
        <authorList>
            <person name="Kaemper J."/>
            <person name="Kahmann R."/>
            <person name="Boelker M."/>
            <person name="Ma L.-J."/>
            <person name="Brefort T."/>
            <person name="Saville B.J."/>
            <person name="Banuett F."/>
            <person name="Kronstad J.W."/>
            <person name="Gold S.E."/>
            <person name="Mueller O."/>
            <person name="Perlin M.H."/>
            <person name="Woesten H.A.B."/>
            <person name="de Vries R."/>
            <person name="Ruiz-Herrera J."/>
            <person name="Reynaga-Pena C.G."/>
            <person name="Snetselaar K."/>
            <person name="McCann M."/>
            <person name="Perez-Martin J."/>
            <person name="Feldbruegge M."/>
            <person name="Basse C.W."/>
            <person name="Steinberg G."/>
            <person name="Ibeas J.I."/>
            <person name="Holloman W."/>
            <person name="Guzman P."/>
            <person name="Farman M.L."/>
            <person name="Stajich J.E."/>
            <person name="Sentandreu R."/>
            <person name="Gonzalez-Prieto J.M."/>
            <person name="Kennell J.C."/>
            <person name="Molina L."/>
            <person name="Schirawski J."/>
            <person name="Mendoza-Mendoza A."/>
            <person name="Greilinger D."/>
            <person name="Muench K."/>
            <person name="Roessel N."/>
            <person name="Scherer M."/>
            <person name="Vranes M."/>
            <person name="Ladendorf O."/>
            <person name="Vincon V."/>
            <person name="Fuchs U."/>
            <person name="Sandrock B."/>
            <person name="Meng S."/>
            <person name="Ho E.C.H."/>
            <person name="Cahill M.J."/>
            <person name="Boyce K.J."/>
            <person name="Klose J."/>
            <person name="Klosterman S.J."/>
            <person name="Deelstra H.J."/>
            <person name="Ortiz-Castellanos L."/>
            <person name="Li W."/>
            <person name="Sanchez-Alonso P."/>
            <person name="Schreier P.H."/>
            <person name="Haeuser-Hahn I."/>
            <person name="Vaupel M."/>
            <person name="Koopmann E."/>
            <person name="Friedrich G."/>
            <person name="Voss H."/>
            <person name="Schlueter T."/>
            <person name="Margolis J."/>
            <person name="Platt D."/>
            <person name="Swimmer C."/>
            <person name="Gnirke A."/>
            <person name="Chen F."/>
            <person name="Vysotskaia V."/>
            <person name="Mannhaupt G."/>
            <person name="Gueldener U."/>
            <person name="Muensterkoetter M."/>
            <person name="Haase D."/>
            <person name="Oesterheld M."/>
            <person name="Mewes H.-W."/>
            <person name="Mauceli E.W."/>
            <person name="DeCaprio D."/>
            <person name="Wade C.M."/>
            <person name="Butler J."/>
            <person name="Young S.K."/>
            <person name="Jaffe D.B."/>
            <person name="Calvo S.E."/>
            <person name="Nusbaum C."/>
            <person name="Galagan J.E."/>
            <person name="Birren B.W."/>
        </authorList>
    </citation>
    <scope>NUCLEOTIDE SEQUENCE [LARGE SCALE GENOMIC DNA]</scope>
    <source>
        <strain>DSM 14603 / FGSC 9021 / UM521</strain>
    </source>
</reference>
<reference key="2">
    <citation type="submission" date="2014-09" db="EMBL/GenBank/DDBJ databases">
        <authorList>
            <person name="Gueldener U."/>
            <person name="Muensterkoetter M."/>
            <person name="Walter M.C."/>
            <person name="Mannhaupt G."/>
            <person name="Kahmann R."/>
        </authorList>
    </citation>
    <scope>GENOME REANNOTATION</scope>
    <source>
        <strain>DSM 14603 / FGSC 9021 / UM521</strain>
    </source>
</reference>
<reference key="3">
    <citation type="journal article" date="1992" name="Proc. Natl. Acad. Sci. U.S.A.">
        <title>Classification of fungal chitin synthases.</title>
        <authorList>
            <person name="Bowen A.R."/>
            <person name="Chen-Wu J.L.-P."/>
            <person name="Momany M."/>
            <person name="Young R."/>
            <person name="Szaniszlo P.J."/>
            <person name="Robbins P.W."/>
        </authorList>
    </citation>
    <scope>NUCLEOTIDE SEQUENCE [GENOMIC DNA] OF 405-590</scope>
</reference>
<reference key="4">
    <citation type="journal article" date="2006" name="Plant Cell">
        <title>Polar localizing class V myosin chitin synthases are essential during early plant infection in the plant pathogenic fungus Ustilago maydis.</title>
        <authorList>
            <person name="Weber I."/>
            <person name="Assmann D."/>
            <person name="Thines E."/>
            <person name="Steinberg G."/>
        </authorList>
    </citation>
    <scope>SUBCELLULAR LOCATION</scope>
</reference>
<reference key="5">
    <citation type="journal article" date="2012" name="Curr. Microbiol.">
        <title>Transcriptional regulation of the genes encoding chitin and beta-1,3-glucan synthases from Ustilago maydis.</title>
        <authorList>
            <person name="Robledo-Briones M."/>
            <person name="Ruiz-Herrera J."/>
        </authorList>
    </citation>
    <scope>INDUCTION</scope>
</reference>
<proteinExistence type="evidence at transcript level"/>
<dbReference type="EC" id="2.4.1.16" evidence="8"/>
<dbReference type="EMBL" id="CM003151">
    <property type="protein sequence ID" value="KIS67796.1"/>
    <property type="molecule type" value="Genomic_DNA"/>
</dbReference>
<dbReference type="EMBL" id="M82959">
    <property type="protein sequence ID" value="AAA34225.1"/>
    <property type="molecule type" value="Genomic_DNA"/>
</dbReference>
<dbReference type="PIR" id="A45189">
    <property type="entry name" value="A45189"/>
</dbReference>
<dbReference type="RefSeq" id="XP_011390745.1">
    <property type="nucleotide sequence ID" value="XM_011392443.1"/>
</dbReference>
<dbReference type="SMR" id="P30599"/>
<dbReference type="STRING" id="237631.P30599"/>
<dbReference type="CAZy" id="GT2">
    <property type="family name" value="Glycosyltransferase Family 2"/>
</dbReference>
<dbReference type="GlyCosmos" id="P30599">
    <property type="glycosylation" value="4 sites, No reported glycans"/>
</dbReference>
<dbReference type="EnsemblFungi" id="KIS67796">
    <property type="protein sequence ID" value="KIS67796"/>
    <property type="gene ID" value="UMAG_04290"/>
</dbReference>
<dbReference type="GeneID" id="23564516"/>
<dbReference type="KEGG" id="uma:UMAG_04290"/>
<dbReference type="VEuPathDB" id="FungiDB:UMAG_04290"/>
<dbReference type="eggNOG" id="KOG2571">
    <property type="taxonomic scope" value="Eukaryota"/>
</dbReference>
<dbReference type="HOGENOM" id="CLU_004760_3_0_1"/>
<dbReference type="InParanoid" id="P30599"/>
<dbReference type="OMA" id="GEYEMHA"/>
<dbReference type="OrthoDB" id="26569at2759"/>
<dbReference type="BRENDA" id="2.4.1.16">
    <property type="organism ID" value="6587"/>
</dbReference>
<dbReference type="PHI-base" id="PHI:1109"/>
<dbReference type="Proteomes" id="UP000000561">
    <property type="component" value="Chromosome 12"/>
</dbReference>
<dbReference type="GO" id="GO:0071944">
    <property type="term" value="C:cell periphery"/>
    <property type="evidence" value="ECO:0000318"/>
    <property type="project" value="GO_Central"/>
</dbReference>
<dbReference type="GO" id="GO:0030428">
    <property type="term" value="C:cell septum"/>
    <property type="evidence" value="ECO:0000318"/>
    <property type="project" value="GO_Central"/>
</dbReference>
<dbReference type="GO" id="GO:0030659">
    <property type="term" value="C:cytoplasmic vesicle membrane"/>
    <property type="evidence" value="ECO:0007669"/>
    <property type="project" value="UniProtKB-SubCell"/>
</dbReference>
<dbReference type="GO" id="GO:0005886">
    <property type="term" value="C:plasma membrane"/>
    <property type="evidence" value="ECO:0007669"/>
    <property type="project" value="UniProtKB-SubCell"/>
</dbReference>
<dbReference type="GO" id="GO:0004100">
    <property type="term" value="F:chitin synthase activity"/>
    <property type="evidence" value="ECO:0000318"/>
    <property type="project" value="GO_Central"/>
</dbReference>
<dbReference type="GO" id="GO:0071555">
    <property type="term" value="P:cell wall organization"/>
    <property type="evidence" value="ECO:0007669"/>
    <property type="project" value="UniProtKB-KW"/>
</dbReference>
<dbReference type="GO" id="GO:0006031">
    <property type="term" value="P:chitin biosynthetic process"/>
    <property type="evidence" value="ECO:0000318"/>
    <property type="project" value="GO_Central"/>
</dbReference>
<dbReference type="CDD" id="cd04190">
    <property type="entry name" value="Chitin_synth_C"/>
    <property type="match status" value="1"/>
</dbReference>
<dbReference type="InterPro" id="IPR004835">
    <property type="entry name" value="Chitin_synth"/>
</dbReference>
<dbReference type="InterPro" id="IPR004834">
    <property type="entry name" value="Chitin_synth_fun"/>
</dbReference>
<dbReference type="InterPro" id="IPR013616">
    <property type="entry name" value="Chitin_synth_N"/>
</dbReference>
<dbReference type="InterPro" id="IPR001173">
    <property type="entry name" value="Glyco_trans_2-like"/>
</dbReference>
<dbReference type="InterPro" id="IPR029044">
    <property type="entry name" value="Nucleotide-diphossugar_trans"/>
</dbReference>
<dbReference type="PANTHER" id="PTHR22914">
    <property type="entry name" value="CHITIN SYNTHASE"/>
    <property type="match status" value="1"/>
</dbReference>
<dbReference type="PANTHER" id="PTHR22914:SF44">
    <property type="entry name" value="CHITIN SYNTHASE 2"/>
    <property type="match status" value="1"/>
</dbReference>
<dbReference type="Pfam" id="PF01644">
    <property type="entry name" value="Chitin_synth_1"/>
    <property type="match status" value="1"/>
</dbReference>
<dbReference type="Pfam" id="PF08407">
    <property type="entry name" value="Chitin_synth_1N"/>
    <property type="match status" value="1"/>
</dbReference>
<dbReference type="Pfam" id="PF13632">
    <property type="entry name" value="Glyco_trans_2_3"/>
    <property type="match status" value="1"/>
</dbReference>
<dbReference type="SUPFAM" id="SSF53448">
    <property type="entry name" value="Nucleotide-diphospho-sugar transferases"/>
    <property type="match status" value="1"/>
</dbReference>
<organism>
    <name type="scientific">Mycosarcoma maydis</name>
    <name type="common">Corn smut fungus</name>
    <name type="synonym">Ustilago maydis</name>
    <dbReference type="NCBI Taxonomy" id="5270"/>
    <lineage>
        <taxon>Eukaryota</taxon>
        <taxon>Fungi</taxon>
        <taxon>Dikarya</taxon>
        <taxon>Basidiomycota</taxon>
        <taxon>Ustilaginomycotina</taxon>
        <taxon>Ustilaginomycetes</taxon>
        <taxon>Ustilaginales</taxon>
        <taxon>Ustilaginaceae</taxon>
        <taxon>Mycosarcoma</taxon>
    </lineage>
</organism>
<sequence>MSHYHRQGGPGQPHDSYEDQQQPYYTDQAHSGYDHHSYHQQQLYHAAYDAAQPEYQAAPVKPQRQPSRIRSNSSGSRSVSHTPAAYTNQGIPPVPSNLSAARQRSDPSQALPPSSSSYAQDAFSRPSYSSHRNAPNAPNSNHPSRWDPNASYDTAPTAPLYDPAPLPGSGQLDADPSQHSIDLGVREPLYDDQVMQQHYPYGGAAAFQRSDSYQSGRPGAGGYHSIDDEKSIHSKHSNQPPGAWNAGAPSMPYNNMPTSHSTIQMAQPAYPPSPYGEYEMHATGMPEPNMSIAGLGAPGALIAAAPMPGMQHHDSTYSRENRERIMRKRTVKRIPLQDGNLVLDIPVASSISKSTTNNPEFREMRYQACTSDPDRFIEEKYTLRPWLYGRETEMAIVLTCYNEDDVLFARTMGGVIKNIAHLCSRTRSKTWGPDAWKKVVVIIVADGRKKANERMLKALGLMGCYNEGVMKDHVLKKPVEAHIFEYTTRVQITEKGEVKVTPCPIQVVFCLKEQNKKKLNSHRWYFNAFCQMLKPNVCILLDVGTKPTGTSIYELWKSFDKHHRVGGACGEICVDTGRGCTALFNPLVASQNFEYKMSNILDKPTESVFGFISVLPGAFSAYRYKALLGRPLEMYFKGEKLHSGEGSNSIFEGNMYLAEDRILCFELVTKEREGWLLRYVKSAKAYTDVPDRVPEFISQRRRWLNGSLFASYYAVWHWYRIFTSGQPFLRKLWLLFQVIYNLVLLVFSWFGIANFFLAFYFLLSASTSTEGSDPFGGQGAAIVEIFQNIFIAMVIVVLVCSLGNRPQGSNFAYTSAIIIFALIMGLALYAAGYTIYLALDAAGLTHTNGWRVDNLETLFKTSGFRDIVISLAATYVMWLLCSLLHLEPWHMLTSFVQYLFLTPTYVIILSMYSMCNTNDLSWGTKQSNGPATDLGGATGCNSKQDGKGEMVDVKIPTSAADAEELWTHYRQTLSQPTVEVKQKRDKATRQEDHAKNFRTNLVLIWMCTNALVVIIFTSTWWNKYVRNHIYAGAVRRGEPVINPYQSAIFWSTAGLSAVRFVGSITFLLLRLFGH</sequence>
<comment type="function">
    <text evidence="8">Polymerizes chitin, a structural polymer of the cell wall and septum, by transferring the sugar moiety of UDP-GlcNAc to the non-reducing end of the growing chitin polymer.</text>
</comment>
<comment type="catalytic activity">
    <reaction evidence="8">
        <text>[(1-&gt;4)-N-acetyl-beta-D-glucosaminyl](n) + UDP-N-acetyl-alpha-D-glucosamine = [(1-&gt;4)-N-acetyl-beta-D-glucosaminyl](n+1) + UDP + H(+)</text>
        <dbReference type="Rhea" id="RHEA:16637"/>
        <dbReference type="Rhea" id="RHEA-COMP:9593"/>
        <dbReference type="Rhea" id="RHEA-COMP:9595"/>
        <dbReference type="ChEBI" id="CHEBI:15378"/>
        <dbReference type="ChEBI" id="CHEBI:17029"/>
        <dbReference type="ChEBI" id="CHEBI:57705"/>
        <dbReference type="ChEBI" id="CHEBI:58223"/>
        <dbReference type="EC" id="2.4.1.16"/>
    </reaction>
    <physiologicalReaction direction="left-to-right" evidence="8">
        <dbReference type="Rhea" id="RHEA:16638"/>
    </physiologicalReaction>
</comment>
<comment type="subcellular location">
    <subcellularLocation>
        <location evidence="4">Cell membrane</location>
        <topology evidence="4">Multi-pass membrane protein</topology>
    </subcellularLocation>
    <subcellularLocation>
        <location evidence="4">Cytoplasmic vesicle membrane</location>
        <topology evidence="4">Multi-pass membrane protein</topology>
    </subcellularLocation>
    <text evidence="1">A constitutive cytoplasmic pool is present that localizes to intracellular microvesicles termed chitosomes. Chitosomes constitute a separate secretory route distinct from the typical secretory pathway and serve as a vehicle for delivering the enzyme to the sites on the cell surface where polysaccharide sythesis takes place (By similarity). Localizes to septa of yeast-like cells and to the basal septum separating the living tip cell from the vacuolated part in hyphae.</text>
</comment>
<comment type="induction">
    <text evidence="5">Expression is slightly lower in the yeast form than in the mycelium and shows a maximal expression in the log phase at about 14-18 h of incubation (PubMed:22538468). Shows a late increase in transcription at the stationary phase in both yeast and mycelial cells (PubMed:22538468).</text>
</comment>
<comment type="similarity">
    <text evidence="7">Belongs to the chitin synthase family. Class II subfamily.</text>
</comment>
<feature type="chain" id="PRO_0000193722" description="Chitin synthase 2">
    <location>
        <begin position="1"/>
        <end position="1074"/>
    </location>
</feature>
<feature type="transmembrane region" description="Helical" evidence="2">
    <location>
        <begin position="608"/>
        <end position="628"/>
    </location>
</feature>
<feature type="transmembrane region" description="Helical" evidence="2">
    <location>
        <begin position="742"/>
        <end position="762"/>
    </location>
</feature>
<feature type="transmembrane region" description="Helical" evidence="2">
    <location>
        <begin position="779"/>
        <end position="799"/>
    </location>
</feature>
<feature type="transmembrane region" description="Helical" evidence="2">
    <location>
        <begin position="817"/>
        <end position="837"/>
    </location>
</feature>
<feature type="transmembrane region" description="Helical" evidence="2">
    <location>
        <begin position="867"/>
        <end position="887"/>
    </location>
</feature>
<feature type="transmembrane region" description="Helical" evidence="2">
    <location>
        <begin position="891"/>
        <end position="911"/>
    </location>
</feature>
<feature type="transmembrane region" description="Helical" evidence="2">
    <location>
        <begin position="1001"/>
        <end position="1021"/>
    </location>
</feature>
<feature type="transmembrane region" description="Helical" evidence="2">
    <location>
        <begin position="1048"/>
        <end position="1068"/>
    </location>
</feature>
<feature type="region of interest" description="Disordered" evidence="3">
    <location>
        <begin position="1"/>
        <end position="32"/>
    </location>
</feature>
<feature type="region of interest" description="Disordered" evidence="3">
    <location>
        <begin position="56"/>
        <end position="179"/>
    </location>
</feature>
<feature type="region of interest" description="Disordered" evidence="3">
    <location>
        <begin position="209"/>
        <end position="255"/>
    </location>
</feature>
<feature type="compositionally biased region" description="Polar residues" evidence="3">
    <location>
        <begin position="19"/>
        <end position="29"/>
    </location>
</feature>
<feature type="compositionally biased region" description="Low complexity" evidence="3">
    <location>
        <begin position="68"/>
        <end position="80"/>
    </location>
</feature>
<feature type="compositionally biased region" description="Polar residues" evidence="3">
    <location>
        <begin position="85"/>
        <end position="119"/>
    </location>
</feature>
<feature type="compositionally biased region" description="Low complexity" evidence="3">
    <location>
        <begin position="129"/>
        <end position="143"/>
    </location>
</feature>
<feature type="glycosylation site" description="N-linked (GlcNAc...) asparagine" evidence="2">
    <location>
        <position position="72"/>
    </location>
</feature>
<feature type="glycosylation site" description="N-linked (GlcNAc...) asparagine" evidence="2">
    <location>
        <position position="97"/>
    </location>
</feature>
<feature type="glycosylation site" description="N-linked (GlcNAc...) asparagine" evidence="2">
    <location>
        <position position="149"/>
    </location>
</feature>
<feature type="glycosylation site" description="N-linked (GlcNAc...) asparagine" evidence="2">
    <location>
        <position position="289"/>
    </location>
</feature>
<accession>P30599</accession>
<accession>A0A0D1DVQ8</accession>
<accession>Q4P6H3</accession>
<protein>
    <recommendedName>
        <fullName evidence="6">Chitin synthase 2</fullName>
        <ecNumber evidence="8">2.4.1.16</ecNumber>
    </recommendedName>
    <alternativeName>
        <fullName evidence="7">Chitin-UDP acetyl-glucosaminyl transferase 2</fullName>
    </alternativeName>
</protein>
<gene>
    <name type="primary">CHS2</name>
    <name type="ORF">UMAG_04290</name>
</gene>